<accession>O64624</accession>
<keyword id="KW-0150">Chloroplast</keyword>
<keyword id="KW-0934">Plastid</keyword>
<keyword id="KW-1185">Reference proteome</keyword>
<keyword id="KW-0677">Repeat</keyword>
<keyword id="KW-0809">Transit peptide</keyword>
<protein>
    <recommendedName>
        <fullName>Pentatricopeptide repeat-containing protein At2g18940, chloroplastic</fullName>
    </recommendedName>
</protein>
<dbReference type="EMBL" id="AC003673">
    <property type="protein sequence ID" value="AAC09028.1"/>
    <property type="molecule type" value="Genomic_DNA"/>
</dbReference>
<dbReference type="EMBL" id="CP002685">
    <property type="protein sequence ID" value="AEC06830.1"/>
    <property type="molecule type" value="Genomic_DNA"/>
</dbReference>
<dbReference type="EMBL" id="AY056798">
    <property type="protein sequence ID" value="AAL10489.1"/>
    <property type="molecule type" value="mRNA"/>
</dbReference>
<dbReference type="EMBL" id="BT010749">
    <property type="protein sequence ID" value="AAR23719.1"/>
    <property type="molecule type" value="mRNA"/>
</dbReference>
<dbReference type="PIR" id="T01622">
    <property type="entry name" value="T01622"/>
</dbReference>
<dbReference type="RefSeq" id="NP_179484.1">
    <property type="nucleotide sequence ID" value="NM_127451.2"/>
</dbReference>
<dbReference type="SMR" id="O64624"/>
<dbReference type="FunCoup" id="O64624">
    <property type="interactions" value="112"/>
</dbReference>
<dbReference type="STRING" id="3702.O64624"/>
<dbReference type="iPTMnet" id="O64624"/>
<dbReference type="PaxDb" id="3702-AT2G18940.1"/>
<dbReference type="ProteomicsDB" id="249426"/>
<dbReference type="EnsemblPlants" id="AT2G18940.1">
    <property type="protein sequence ID" value="AT2G18940.1"/>
    <property type="gene ID" value="AT2G18940"/>
</dbReference>
<dbReference type="GeneID" id="816411"/>
<dbReference type="Gramene" id="AT2G18940.1">
    <property type="protein sequence ID" value="AT2G18940.1"/>
    <property type="gene ID" value="AT2G18940"/>
</dbReference>
<dbReference type="KEGG" id="ath:AT2G18940"/>
<dbReference type="Araport" id="AT2G18940"/>
<dbReference type="TAIR" id="AT2G18940"/>
<dbReference type="eggNOG" id="KOG4197">
    <property type="taxonomic scope" value="Eukaryota"/>
</dbReference>
<dbReference type="HOGENOM" id="CLU_002706_49_8_1"/>
<dbReference type="InParanoid" id="O64624"/>
<dbReference type="OMA" id="AMCGNRG"/>
<dbReference type="OrthoDB" id="185373at2759"/>
<dbReference type="PhylomeDB" id="O64624"/>
<dbReference type="PRO" id="PR:O64624"/>
<dbReference type="Proteomes" id="UP000006548">
    <property type="component" value="Chromosome 2"/>
</dbReference>
<dbReference type="ExpressionAtlas" id="O64624">
    <property type="expression patterns" value="baseline and differential"/>
</dbReference>
<dbReference type="GO" id="GO:0009507">
    <property type="term" value="C:chloroplast"/>
    <property type="evidence" value="ECO:0007669"/>
    <property type="project" value="UniProtKB-SubCell"/>
</dbReference>
<dbReference type="GO" id="GO:0003729">
    <property type="term" value="F:mRNA binding"/>
    <property type="evidence" value="ECO:0000314"/>
    <property type="project" value="TAIR"/>
</dbReference>
<dbReference type="FunFam" id="1.25.40.10:FF:000530">
    <property type="entry name" value="Pentatricopeptide repeat-containing protein At1g74850, chloroplastic"/>
    <property type="match status" value="1"/>
</dbReference>
<dbReference type="FunFam" id="1.25.40.10:FF:001584">
    <property type="entry name" value="Pentatricopeptide repeat-containing protein At2g18940, chloroplastic"/>
    <property type="match status" value="1"/>
</dbReference>
<dbReference type="FunFam" id="1.25.40.10:FF:002486">
    <property type="entry name" value="Pentatricopeptide repeat-containing protein At2g18940, chloroplastic"/>
    <property type="match status" value="1"/>
</dbReference>
<dbReference type="Gene3D" id="1.25.40.10">
    <property type="entry name" value="Tetratricopeptide repeat domain"/>
    <property type="match status" value="6"/>
</dbReference>
<dbReference type="InterPro" id="IPR002885">
    <property type="entry name" value="Pentatricopeptide_rpt"/>
</dbReference>
<dbReference type="InterPro" id="IPR050872">
    <property type="entry name" value="PPR_P_subfamily"/>
</dbReference>
<dbReference type="InterPro" id="IPR011990">
    <property type="entry name" value="TPR-like_helical_dom_sf"/>
</dbReference>
<dbReference type="InterPro" id="IPR019734">
    <property type="entry name" value="TPR_rpt"/>
</dbReference>
<dbReference type="NCBIfam" id="TIGR00756">
    <property type="entry name" value="PPR"/>
    <property type="match status" value="15"/>
</dbReference>
<dbReference type="PANTHER" id="PTHR46128">
    <property type="entry name" value="MITOCHONDRIAL GROUP I INTRON SPLICING FACTOR CCM1"/>
    <property type="match status" value="1"/>
</dbReference>
<dbReference type="PANTHER" id="PTHR46128:SF329">
    <property type="entry name" value="MITOCHONDRIAL GROUP I INTRON SPLICING FACTOR DMR1"/>
    <property type="match status" value="1"/>
</dbReference>
<dbReference type="Pfam" id="PF01535">
    <property type="entry name" value="PPR"/>
    <property type="match status" value="1"/>
</dbReference>
<dbReference type="Pfam" id="PF12854">
    <property type="entry name" value="PPR_1"/>
    <property type="match status" value="1"/>
</dbReference>
<dbReference type="Pfam" id="PF13041">
    <property type="entry name" value="PPR_2"/>
    <property type="match status" value="3"/>
</dbReference>
<dbReference type="Pfam" id="PF13812">
    <property type="entry name" value="PPR_3"/>
    <property type="match status" value="4"/>
</dbReference>
<dbReference type="SUPFAM" id="SSF81901">
    <property type="entry name" value="HCP-like"/>
    <property type="match status" value="1"/>
</dbReference>
<dbReference type="PROSITE" id="PS51375">
    <property type="entry name" value="PPR"/>
    <property type="match status" value="16"/>
</dbReference>
<feature type="transit peptide" description="Chloroplast" evidence="1">
    <location>
        <begin position="1"/>
        <end position="77"/>
    </location>
</feature>
<feature type="chain" id="PRO_0000356022" description="Pentatricopeptide repeat-containing protein At2g18940, chloroplastic">
    <location>
        <begin position="78"/>
        <end position="822"/>
    </location>
</feature>
<feature type="repeat" description="PPR 1">
    <location>
        <begin position="209"/>
        <end position="243"/>
    </location>
</feature>
<feature type="repeat" description="PPR 2">
    <location>
        <begin position="244"/>
        <end position="279"/>
    </location>
</feature>
<feature type="repeat" description="PPR 3">
    <location>
        <begin position="280"/>
        <end position="314"/>
    </location>
</feature>
<feature type="repeat" description="PPR 4">
    <location>
        <begin position="315"/>
        <end position="349"/>
    </location>
</feature>
<feature type="repeat" description="PPR 5">
    <location>
        <begin position="350"/>
        <end position="384"/>
    </location>
</feature>
<feature type="repeat" description="PPR 6">
    <location>
        <begin position="385"/>
        <end position="419"/>
    </location>
</feature>
<feature type="repeat" description="PPR 7">
    <location>
        <begin position="420"/>
        <end position="454"/>
    </location>
</feature>
<feature type="repeat" description="PPR 8">
    <location>
        <begin position="455"/>
        <end position="489"/>
    </location>
</feature>
<feature type="repeat" description="PPR 9">
    <location>
        <begin position="490"/>
        <end position="524"/>
    </location>
</feature>
<feature type="repeat" description="PPR 10">
    <location>
        <begin position="525"/>
        <end position="559"/>
    </location>
</feature>
<feature type="repeat" description="PPR 11">
    <location>
        <begin position="560"/>
        <end position="594"/>
    </location>
</feature>
<feature type="repeat" description="PPR 12">
    <location>
        <begin position="595"/>
        <end position="629"/>
    </location>
</feature>
<feature type="repeat" description="PPR 13">
    <location>
        <begin position="630"/>
        <end position="664"/>
    </location>
</feature>
<feature type="repeat" description="PPR 14">
    <location>
        <begin position="665"/>
        <end position="699"/>
    </location>
</feature>
<feature type="repeat" description="PPR 15">
    <location>
        <begin position="700"/>
        <end position="734"/>
    </location>
</feature>
<feature type="repeat" description="PPR 16">
    <location>
        <begin position="735"/>
        <end position="769"/>
    </location>
</feature>
<feature type="repeat" description="PPR 17">
    <location>
        <begin position="770"/>
        <end position="800"/>
    </location>
</feature>
<feature type="region of interest" description="Disordered" evidence="2">
    <location>
        <begin position="1"/>
        <end position="42"/>
    </location>
</feature>
<feature type="compositionally biased region" description="Pro residues" evidence="2">
    <location>
        <begin position="8"/>
        <end position="22"/>
    </location>
</feature>
<feature type="compositionally biased region" description="Low complexity" evidence="2">
    <location>
        <begin position="23"/>
        <end position="37"/>
    </location>
</feature>
<evidence type="ECO:0000255" key="1"/>
<evidence type="ECO:0000256" key="2">
    <source>
        <dbReference type="SAM" id="MobiDB-lite"/>
    </source>
</evidence>
<evidence type="ECO:0000305" key="3"/>
<sequence length="822" mass="92238">MDGALFPHKPPYPIQSKRPPPSQSSNQSIKFSSATLHLPPPSPPSFPLDSLLHHLVHLSSPPPRHSNSAAARFPSLEVSTDSSSSKPILGIEIENERNGSLKLLCKKEVVLVNSIVEQPLTGLSRFFDSVKSELLRTDLVSLVKGLDDSGHWERAVFLFEWLVLSSNSGALKLDHQVIEIFVRILGRESQYSVAAKLLDKIPLQEYLLDVRAYTTILHAYSRTGKYEKAIDLFERMKEMGPSPTLVTYNVILDVFGKMGRSWRKILGVLDEMRSKGLKFDEFTCSTVLSACAREGLLREAKEFFAELKSCGYEPGTVTYNALLQVFGKAGVYTEALSVLKEMEENSCPADSVTYNELVAAYVRAGFSKEAAGVIEMMTKKGVMPNAITYTTVIDAYGKAGKEDEALKLFYSMKEAGCVPNTCTYNAVLSLLGKKSRSNEMIKMLCDMKSNGCSPNRATWNTMLALCGNKGMDKFVNRVFREMKSCGFEPDRDTFNTLISAYGRCGSEVDASKMYGEMTRAGFNACVTTYNALLNALARKGDWRSGENVISDMKSKGFKPTETSYSLMLQCYAKGGNYLGIERIENRIKEGQIFPSWMLLRTLLLANFKCRALAGSERAFTLFKKHGYKPDMVIFNSMLSIFTRNNMYDQAEGILESIREDGLSPDLVTYNSLMDMYVRRGECWKAEEILKTLEKSQLKPDLVSYNTVIKGFCRRGLMQEAVRMLSEMTERGIRPCIFTYNTFVSGYTAMGMFAEIEDVIECMAKNDCRPNELTFKMVVDGYCRAGKYSEAMDFVSKIKTFDPCFDDQSIQRLALRVRENLES</sequence>
<name>PP163_ARATH</name>
<proteinExistence type="evidence at transcript level"/>
<comment type="subcellular location">
    <subcellularLocation>
        <location evidence="3">Plastid</location>
        <location evidence="3">Chloroplast</location>
    </subcellularLocation>
</comment>
<comment type="similarity">
    <text evidence="3">Belongs to the PPR family. P subfamily.</text>
</comment>
<comment type="online information" name="Pentatricopeptide repeat proteins">
    <link uri="https://ppr.plantenergy.uwa.edu.au"/>
</comment>
<reference key="1">
    <citation type="journal article" date="1999" name="Nature">
        <title>Sequence and analysis of chromosome 2 of the plant Arabidopsis thaliana.</title>
        <authorList>
            <person name="Lin X."/>
            <person name="Kaul S."/>
            <person name="Rounsley S.D."/>
            <person name="Shea T.P."/>
            <person name="Benito M.-I."/>
            <person name="Town C.D."/>
            <person name="Fujii C.Y."/>
            <person name="Mason T.M."/>
            <person name="Bowman C.L."/>
            <person name="Barnstead M.E."/>
            <person name="Feldblyum T.V."/>
            <person name="Buell C.R."/>
            <person name="Ketchum K.A."/>
            <person name="Lee J.J."/>
            <person name="Ronning C.M."/>
            <person name="Koo H.L."/>
            <person name="Moffat K.S."/>
            <person name="Cronin L.A."/>
            <person name="Shen M."/>
            <person name="Pai G."/>
            <person name="Van Aken S."/>
            <person name="Umayam L."/>
            <person name="Tallon L.J."/>
            <person name="Gill J.E."/>
            <person name="Adams M.D."/>
            <person name="Carrera A.J."/>
            <person name="Creasy T.H."/>
            <person name="Goodman H.M."/>
            <person name="Somerville C.R."/>
            <person name="Copenhaver G.P."/>
            <person name="Preuss D."/>
            <person name="Nierman W.C."/>
            <person name="White O."/>
            <person name="Eisen J.A."/>
            <person name="Salzberg S.L."/>
            <person name="Fraser C.M."/>
            <person name="Venter J.C."/>
        </authorList>
    </citation>
    <scope>NUCLEOTIDE SEQUENCE [LARGE SCALE GENOMIC DNA]</scope>
    <source>
        <strain>cv. Columbia</strain>
    </source>
</reference>
<reference key="2">
    <citation type="journal article" date="2017" name="Plant J.">
        <title>Araport11: a complete reannotation of the Arabidopsis thaliana reference genome.</title>
        <authorList>
            <person name="Cheng C.Y."/>
            <person name="Krishnakumar V."/>
            <person name="Chan A.P."/>
            <person name="Thibaud-Nissen F."/>
            <person name="Schobel S."/>
            <person name="Town C.D."/>
        </authorList>
    </citation>
    <scope>GENOME REANNOTATION</scope>
    <source>
        <strain>cv. Columbia</strain>
    </source>
</reference>
<reference key="3">
    <citation type="journal article" date="2003" name="Science">
        <title>Empirical analysis of transcriptional activity in the Arabidopsis genome.</title>
        <authorList>
            <person name="Yamada K."/>
            <person name="Lim J."/>
            <person name="Dale J.M."/>
            <person name="Chen H."/>
            <person name="Shinn P."/>
            <person name="Palm C.J."/>
            <person name="Southwick A.M."/>
            <person name="Wu H.C."/>
            <person name="Kim C.J."/>
            <person name="Nguyen M."/>
            <person name="Pham P.K."/>
            <person name="Cheuk R.F."/>
            <person name="Karlin-Newmann G."/>
            <person name="Liu S.X."/>
            <person name="Lam B."/>
            <person name="Sakano H."/>
            <person name="Wu T."/>
            <person name="Yu G."/>
            <person name="Miranda M."/>
            <person name="Quach H.L."/>
            <person name="Tripp M."/>
            <person name="Chang C.H."/>
            <person name="Lee J.M."/>
            <person name="Toriumi M.J."/>
            <person name="Chan M.M."/>
            <person name="Tang C.C."/>
            <person name="Onodera C.S."/>
            <person name="Deng J.M."/>
            <person name="Akiyama K."/>
            <person name="Ansari Y."/>
            <person name="Arakawa T."/>
            <person name="Banh J."/>
            <person name="Banno F."/>
            <person name="Bowser L."/>
            <person name="Brooks S.Y."/>
            <person name="Carninci P."/>
            <person name="Chao Q."/>
            <person name="Choy N."/>
            <person name="Enju A."/>
            <person name="Goldsmith A.D."/>
            <person name="Gurjal M."/>
            <person name="Hansen N.F."/>
            <person name="Hayashizaki Y."/>
            <person name="Johnson-Hopson C."/>
            <person name="Hsuan V.W."/>
            <person name="Iida K."/>
            <person name="Karnes M."/>
            <person name="Khan S."/>
            <person name="Koesema E."/>
            <person name="Ishida J."/>
            <person name="Jiang P.X."/>
            <person name="Jones T."/>
            <person name="Kawai J."/>
            <person name="Kamiya A."/>
            <person name="Meyers C."/>
            <person name="Nakajima M."/>
            <person name="Narusaka M."/>
            <person name="Seki M."/>
            <person name="Sakurai T."/>
            <person name="Satou M."/>
            <person name="Tamse R."/>
            <person name="Vaysberg M."/>
            <person name="Wallender E.K."/>
            <person name="Wong C."/>
            <person name="Yamamura Y."/>
            <person name="Yuan S."/>
            <person name="Shinozaki K."/>
            <person name="Davis R.W."/>
            <person name="Theologis A."/>
            <person name="Ecker J.R."/>
        </authorList>
    </citation>
    <scope>NUCLEOTIDE SEQUENCE [LARGE SCALE MRNA]</scope>
    <source>
        <strain>cv. Columbia</strain>
    </source>
</reference>
<reference key="4">
    <citation type="submission" date="2003-11" db="EMBL/GenBank/DDBJ databases">
        <title>Arabidopsis cDNA clones.</title>
        <authorList>
            <person name="Cheuk R.F."/>
            <person name="Chen H."/>
            <person name="Kim C.J."/>
            <person name="Shinn P."/>
            <person name="Carninci P."/>
            <person name="Hayashizaki Y."/>
            <person name="Ishida J."/>
            <person name="Kamiya A."/>
            <person name="Kawai J."/>
            <person name="Narusaka M."/>
            <person name="Sakurai T."/>
            <person name="Satou M."/>
            <person name="Seki M."/>
            <person name="Shinozaki K."/>
            <person name="Ecker J.R."/>
        </authorList>
    </citation>
    <scope>NUCLEOTIDE SEQUENCE [LARGE SCALE MRNA]</scope>
    <source>
        <strain>cv. Columbia</strain>
    </source>
</reference>
<reference key="5">
    <citation type="journal article" date="2004" name="Plant Cell">
        <title>Genome-wide analysis of Arabidopsis pentatricopeptide repeat proteins reveals their essential role in organelle biogenesis.</title>
        <authorList>
            <person name="Lurin C."/>
            <person name="Andres C."/>
            <person name="Aubourg S."/>
            <person name="Bellaoui M."/>
            <person name="Bitton F."/>
            <person name="Bruyere C."/>
            <person name="Caboche M."/>
            <person name="Debast C."/>
            <person name="Gualberto J."/>
            <person name="Hoffmann B."/>
            <person name="Lecharny A."/>
            <person name="Le Ret M."/>
            <person name="Martin-Magniette M.-L."/>
            <person name="Mireau H."/>
            <person name="Peeters N."/>
            <person name="Renou J.-P."/>
            <person name="Szurek B."/>
            <person name="Taconnat L."/>
            <person name="Small I."/>
        </authorList>
    </citation>
    <scope>GENE FAMILY</scope>
</reference>
<gene>
    <name type="ordered locus">At2g18940</name>
    <name type="ORF">F19F24.14</name>
</gene>
<organism>
    <name type="scientific">Arabidopsis thaliana</name>
    <name type="common">Mouse-ear cress</name>
    <dbReference type="NCBI Taxonomy" id="3702"/>
    <lineage>
        <taxon>Eukaryota</taxon>
        <taxon>Viridiplantae</taxon>
        <taxon>Streptophyta</taxon>
        <taxon>Embryophyta</taxon>
        <taxon>Tracheophyta</taxon>
        <taxon>Spermatophyta</taxon>
        <taxon>Magnoliopsida</taxon>
        <taxon>eudicotyledons</taxon>
        <taxon>Gunneridae</taxon>
        <taxon>Pentapetalae</taxon>
        <taxon>rosids</taxon>
        <taxon>malvids</taxon>
        <taxon>Brassicales</taxon>
        <taxon>Brassicaceae</taxon>
        <taxon>Camelineae</taxon>
        <taxon>Arabidopsis</taxon>
    </lineage>
</organism>